<name>CYB_PSEWO</name>
<geneLocation type="mitochondrion"/>
<proteinExistence type="inferred from homology"/>
<gene>
    <name type="primary">MT-CYB</name>
    <name type="synonym">COB</name>
    <name type="synonym">CYTB</name>
    <name type="synonym">MTCYB</name>
</gene>
<dbReference type="EMBL" id="U07593">
    <property type="protein sequence ID" value="AAB88769.1"/>
    <property type="molecule type" value="Genomic_DNA"/>
</dbReference>
<dbReference type="SMR" id="Q35695"/>
<dbReference type="GO" id="GO:0005743">
    <property type="term" value="C:mitochondrial inner membrane"/>
    <property type="evidence" value="ECO:0007669"/>
    <property type="project" value="UniProtKB-SubCell"/>
</dbReference>
<dbReference type="GO" id="GO:0045275">
    <property type="term" value="C:respiratory chain complex III"/>
    <property type="evidence" value="ECO:0007669"/>
    <property type="project" value="InterPro"/>
</dbReference>
<dbReference type="GO" id="GO:0046872">
    <property type="term" value="F:metal ion binding"/>
    <property type="evidence" value="ECO:0007669"/>
    <property type="project" value="UniProtKB-KW"/>
</dbReference>
<dbReference type="GO" id="GO:0008121">
    <property type="term" value="F:ubiquinol-cytochrome-c reductase activity"/>
    <property type="evidence" value="ECO:0007669"/>
    <property type="project" value="InterPro"/>
</dbReference>
<dbReference type="GO" id="GO:0006122">
    <property type="term" value="P:mitochondrial electron transport, ubiquinol to cytochrome c"/>
    <property type="evidence" value="ECO:0007669"/>
    <property type="project" value="TreeGrafter"/>
</dbReference>
<dbReference type="CDD" id="cd00290">
    <property type="entry name" value="cytochrome_b_C"/>
    <property type="match status" value="1"/>
</dbReference>
<dbReference type="CDD" id="cd00284">
    <property type="entry name" value="Cytochrome_b_N"/>
    <property type="match status" value="1"/>
</dbReference>
<dbReference type="FunFam" id="1.20.810.10:FF:000002">
    <property type="entry name" value="Cytochrome b"/>
    <property type="match status" value="1"/>
</dbReference>
<dbReference type="Gene3D" id="1.20.810.10">
    <property type="entry name" value="Cytochrome Bc1 Complex, Chain C"/>
    <property type="match status" value="1"/>
</dbReference>
<dbReference type="InterPro" id="IPR005798">
    <property type="entry name" value="Cyt_b/b6_C"/>
</dbReference>
<dbReference type="InterPro" id="IPR036150">
    <property type="entry name" value="Cyt_b/b6_C_sf"/>
</dbReference>
<dbReference type="InterPro" id="IPR005797">
    <property type="entry name" value="Cyt_b/b6_N"/>
</dbReference>
<dbReference type="InterPro" id="IPR027387">
    <property type="entry name" value="Cytb/b6-like_sf"/>
</dbReference>
<dbReference type="InterPro" id="IPR030689">
    <property type="entry name" value="Cytochrome_b"/>
</dbReference>
<dbReference type="InterPro" id="IPR048260">
    <property type="entry name" value="Cytochrome_b_C_euk/bac"/>
</dbReference>
<dbReference type="InterPro" id="IPR048259">
    <property type="entry name" value="Cytochrome_b_N_euk/bac"/>
</dbReference>
<dbReference type="InterPro" id="IPR016174">
    <property type="entry name" value="Di-haem_cyt_TM"/>
</dbReference>
<dbReference type="PANTHER" id="PTHR19271">
    <property type="entry name" value="CYTOCHROME B"/>
    <property type="match status" value="1"/>
</dbReference>
<dbReference type="PANTHER" id="PTHR19271:SF16">
    <property type="entry name" value="CYTOCHROME B"/>
    <property type="match status" value="1"/>
</dbReference>
<dbReference type="Pfam" id="PF00032">
    <property type="entry name" value="Cytochrom_B_C"/>
    <property type="match status" value="1"/>
</dbReference>
<dbReference type="Pfam" id="PF00033">
    <property type="entry name" value="Cytochrome_B"/>
    <property type="match status" value="1"/>
</dbReference>
<dbReference type="PIRSF" id="PIRSF038885">
    <property type="entry name" value="COB"/>
    <property type="match status" value="1"/>
</dbReference>
<dbReference type="SUPFAM" id="SSF81648">
    <property type="entry name" value="a domain/subunit of cytochrome bc1 complex (Ubiquinol-cytochrome c reductase)"/>
    <property type="match status" value="1"/>
</dbReference>
<dbReference type="SUPFAM" id="SSF81342">
    <property type="entry name" value="Transmembrane di-heme cytochromes"/>
    <property type="match status" value="1"/>
</dbReference>
<dbReference type="PROSITE" id="PS51003">
    <property type="entry name" value="CYTB_CTER"/>
    <property type="match status" value="1"/>
</dbReference>
<dbReference type="PROSITE" id="PS51002">
    <property type="entry name" value="CYTB_NTER"/>
    <property type="match status" value="1"/>
</dbReference>
<comment type="function">
    <text evidence="2">Component of the ubiquinol-cytochrome c reductase complex (complex III or cytochrome b-c1 complex) that is part of the mitochondrial respiratory chain. The b-c1 complex mediates electron transfer from ubiquinol to cytochrome c. Contributes to the generation of a proton gradient across the mitochondrial membrane that is then used for ATP synthesis.</text>
</comment>
<comment type="cofactor">
    <cofactor evidence="2">
        <name>heme b</name>
        <dbReference type="ChEBI" id="CHEBI:60344"/>
    </cofactor>
    <text evidence="2">Binds 2 heme b groups non-covalently.</text>
</comment>
<comment type="subunit">
    <text evidence="2">The cytochrome bc1 complex contains 11 subunits: 3 respiratory subunits (MT-CYB, CYC1 and UQCRFS1), 2 core proteins (UQCRC1 and UQCRC2) and 6 low-molecular weight proteins (UQCRH/QCR6, UQCRB/QCR7, UQCRQ/QCR8, UQCR10/QCR9, UQCR11/QCR10 and a cleavage product of UQCRFS1). This cytochrome bc1 complex then forms a dimer.</text>
</comment>
<comment type="subcellular location">
    <subcellularLocation>
        <location evidence="2">Mitochondrion inner membrane</location>
        <topology evidence="2">Multi-pass membrane protein</topology>
    </subcellularLocation>
</comment>
<comment type="miscellaneous">
    <text evidence="1">Heme 1 (or BL or b562) is low-potential and absorbs at about 562 nm, and heme 2 (or BH or b566) is high-potential and absorbs at about 566 nm.</text>
</comment>
<comment type="similarity">
    <text evidence="3 4">Belongs to the cytochrome b family.</text>
</comment>
<comment type="caution">
    <text evidence="2">The full-length protein contains only eight transmembrane helices, not nine as predicted by bioinformatics tools.</text>
</comment>
<sequence>MTNLRKTHPLLKIINHSFIDLPAPSNISAWWNFGSLLGICLIIQILTGLFLAMHYTSDTLTAFSSVAHICRDVNHGWFLRNLHANGASMFFMCLFLHVGRGIYYGSYLYKETWNIGVILLLTVMATAFVGYVLPWGQMSFWGATVITNLLSAIPYIGTTLAEWIWGGFAVDKATLTRFFAFHFILPFIITALAIVHLLFLHETGSNNPSGINPNSDKIPFHPYYTIKDALGLMLLLLVLLILALFSPDLLGDPDNFSPANPLNTPPHIKPEWYFLFAYAILRSIPNKLGGVLALLASILILLIIPLLHTANQRSMMFRPISQTLFWILTANLITLTWIGGQPVEQPFIIIGQLASMLYFLLILVLMPTAGLFENYMLKPKW</sequence>
<reference key="1">
    <citation type="journal article" date="1994" name="J. Mammal. Evol.">
        <title>Phylogenetic structure of the marsupial family Dasyuridae based on cytochrome-b DNA sequences.</title>
        <authorList>
            <person name="Krajewski C."/>
            <person name="Painter J."/>
            <person name="Buckley L."/>
            <person name="Westerman M."/>
        </authorList>
    </citation>
    <scope>NUCLEOTIDE SEQUENCE [GENOMIC DNA]</scope>
</reference>
<protein>
    <recommendedName>
        <fullName>Cytochrome b</fullName>
    </recommendedName>
    <alternativeName>
        <fullName>Complex III subunit 3</fullName>
    </alternativeName>
    <alternativeName>
        <fullName>Complex III subunit III</fullName>
    </alternativeName>
    <alternativeName>
        <fullName>Cytochrome b-c1 complex subunit 3</fullName>
    </alternativeName>
    <alternativeName>
        <fullName>Ubiquinol-cytochrome-c reductase complex cytochrome b subunit</fullName>
    </alternativeName>
</protein>
<accession>Q35695</accession>
<organism>
    <name type="scientific">Pseudantechinus woolleyae</name>
    <name type="common">Woolley's false antechinus</name>
    <dbReference type="NCBI Taxonomy" id="32559"/>
    <lineage>
        <taxon>Eukaryota</taxon>
        <taxon>Metazoa</taxon>
        <taxon>Chordata</taxon>
        <taxon>Craniata</taxon>
        <taxon>Vertebrata</taxon>
        <taxon>Euteleostomi</taxon>
        <taxon>Mammalia</taxon>
        <taxon>Metatheria</taxon>
        <taxon>Dasyuromorphia</taxon>
        <taxon>Dasyuridae</taxon>
        <taxon>Pseudantechinus</taxon>
    </lineage>
</organism>
<feature type="chain" id="PRO_0000061454" description="Cytochrome b">
    <location>
        <begin position="1"/>
        <end position="381"/>
    </location>
</feature>
<feature type="transmembrane region" description="Helical" evidence="2">
    <location>
        <begin position="33"/>
        <end position="53"/>
    </location>
</feature>
<feature type="transmembrane region" description="Helical" evidence="2">
    <location>
        <begin position="77"/>
        <end position="98"/>
    </location>
</feature>
<feature type="transmembrane region" description="Helical" evidence="2">
    <location>
        <begin position="113"/>
        <end position="133"/>
    </location>
</feature>
<feature type="transmembrane region" description="Helical" evidence="2">
    <location>
        <begin position="178"/>
        <end position="198"/>
    </location>
</feature>
<feature type="transmembrane region" description="Helical" evidence="2">
    <location>
        <begin position="226"/>
        <end position="246"/>
    </location>
</feature>
<feature type="transmembrane region" description="Helical" evidence="2">
    <location>
        <begin position="288"/>
        <end position="308"/>
    </location>
</feature>
<feature type="transmembrane region" description="Helical" evidence="2">
    <location>
        <begin position="320"/>
        <end position="340"/>
    </location>
</feature>
<feature type="transmembrane region" description="Helical" evidence="2">
    <location>
        <begin position="347"/>
        <end position="367"/>
    </location>
</feature>
<feature type="binding site" description="axial binding residue" evidence="2">
    <location>
        <position position="83"/>
    </location>
    <ligand>
        <name>heme b</name>
        <dbReference type="ChEBI" id="CHEBI:60344"/>
        <label>b562</label>
    </ligand>
    <ligandPart>
        <name>Fe</name>
        <dbReference type="ChEBI" id="CHEBI:18248"/>
    </ligandPart>
</feature>
<feature type="binding site" description="axial binding residue" evidence="2">
    <location>
        <position position="97"/>
    </location>
    <ligand>
        <name>heme b</name>
        <dbReference type="ChEBI" id="CHEBI:60344"/>
        <label>b566</label>
    </ligand>
    <ligandPart>
        <name>Fe</name>
        <dbReference type="ChEBI" id="CHEBI:18248"/>
    </ligandPart>
</feature>
<feature type="binding site" description="axial binding residue" evidence="2">
    <location>
        <position position="182"/>
    </location>
    <ligand>
        <name>heme b</name>
        <dbReference type="ChEBI" id="CHEBI:60344"/>
        <label>b562</label>
    </ligand>
    <ligandPart>
        <name>Fe</name>
        <dbReference type="ChEBI" id="CHEBI:18248"/>
    </ligandPart>
</feature>
<feature type="binding site" description="axial binding residue" evidence="2">
    <location>
        <position position="196"/>
    </location>
    <ligand>
        <name>heme b</name>
        <dbReference type="ChEBI" id="CHEBI:60344"/>
        <label>b566</label>
    </ligand>
    <ligandPart>
        <name>Fe</name>
        <dbReference type="ChEBI" id="CHEBI:18248"/>
    </ligandPart>
</feature>
<feature type="binding site" evidence="2">
    <location>
        <position position="201"/>
    </location>
    <ligand>
        <name>a ubiquinone</name>
        <dbReference type="ChEBI" id="CHEBI:16389"/>
    </ligand>
</feature>
<evidence type="ECO:0000250" key="1"/>
<evidence type="ECO:0000250" key="2">
    <source>
        <dbReference type="UniProtKB" id="P00157"/>
    </source>
</evidence>
<evidence type="ECO:0000255" key="3">
    <source>
        <dbReference type="PROSITE-ProRule" id="PRU00967"/>
    </source>
</evidence>
<evidence type="ECO:0000255" key="4">
    <source>
        <dbReference type="PROSITE-ProRule" id="PRU00968"/>
    </source>
</evidence>
<keyword id="KW-0249">Electron transport</keyword>
<keyword id="KW-0349">Heme</keyword>
<keyword id="KW-0408">Iron</keyword>
<keyword id="KW-0472">Membrane</keyword>
<keyword id="KW-0479">Metal-binding</keyword>
<keyword id="KW-0496">Mitochondrion</keyword>
<keyword id="KW-0999">Mitochondrion inner membrane</keyword>
<keyword id="KW-0679">Respiratory chain</keyword>
<keyword id="KW-0812">Transmembrane</keyword>
<keyword id="KW-1133">Transmembrane helix</keyword>
<keyword id="KW-0813">Transport</keyword>
<keyword id="KW-0830">Ubiquinone</keyword>